<protein>
    <recommendedName>
        <fullName evidence="1">Phosphoribosylformylglycinamidine cyclo-ligase</fullName>
        <ecNumber evidence="1">6.3.3.1</ecNumber>
    </recommendedName>
    <alternativeName>
        <fullName evidence="1">AIR synthase</fullName>
    </alternativeName>
    <alternativeName>
        <fullName evidence="1">AIRS</fullName>
    </alternativeName>
    <alternativeName>
        <fullName evidence="1">Phosphoribosyl-aminoimidazole synthetase</fullName>
    </alternativeName>
</protein>
<name>PUR5_SHEDO</name>
<organism>
    <name type="scientific">Shewanella denitrificans (strain OS217 / ATCC BAA-1090 / DSM 15013)</name>
    <dbReference type="NCBI Taxonomy" id="318161"/>
    <lineage>
        <taxon>Bacteria</taxon>
        <taxon>Pseudomonadati</taxon>
        <taxon>Pseudomonadota</taxon>
        <taxon>Gammaproteobacteria</taxon>
        <taxon>Alteromonadales</taxon>
        <taxon>Shewanellaceae</taxon>
        <taxon>Shewanella</taxon>
    </lineage>
</organism>
<accession>Q12MF0</accession>
<feature type="chain" id="PRO_1000062164" description="Phosphoribosylformylglycinamidine cyclo-ligase">
    <location>
        <begin position="1"/>
        <end position="345"/>
    </location>
</feature>
<gene>
    <name evidence="1" type="primary">purM</name>
    <name type="ordered locus">Sden_2094</name>
</gene>
<comment type="catalytic activity">
    <reaction evidence="1">
        <text>2-formamido-N(1)-(5-O-phospho-beta-D-ribosyl)acetamidine + ATP = 5-amino-1-(5-phospho-beta-D-ribosyl)imidazole + ADP + phosphate + H(+)</text>
        <dbReference type="Rhea" id="RHEA:23032"/>
        <dbReference type="ChEBI" id="CHEBI:15378"/>
        <dbReference type="ChEBI" id="CHEBI:30616"/>
        <dbReference type="ChEBI" id="CHEBI:43474"/>
        <dbReference type="ChEBI" id="CHEBI:137981"/>
        <dbReference type="ChEBI" id="CHEBI:147287"/>
        <dbReference type="ChEBI" id="CHEBI:456216"/>
        <dbReference type="EC" id="6.3.3.1"/>
    </reaction>
</comment>
<comment type="pathway">
    <text evidence="1">Purine metabolism; IMP biosynthesis via de novo pathway; 5-amino-1-(5-phospho-D-ribosyl)imidazole from N(2)-formyl-N(1)-(5-phospho-D-ribosyl)glycinamide: step 2/2.</text>
</comment>
<comment type="subcellular location">
    <subcellularLocation>
        <location evidence="1">Cytoplasm</location>
    </subcellularLocation>
</comment>
<comment type="similarity">
    <text evidence="1">Belongs to the AIR synthase family.</text>
</comment>
<sequence>MSTPTPLSYKDAGVDIDAGNALVNNIKSAVKRTHRPEVMGNLGGFGALCELPTKYKHPVLVSGTDGVGTKLRLAIDYKKHDTVGIDLVAMCVNDLIVQGAEPLFFLDYYATGKLDVDTATSVVNGIGEGCFQSGCALIGGETAEMPGMYEGEDYDLAGFCVGVVEKADIIDGTKVSAGDALIALASSGPHSNGYSLIRKVLEVSKADPQQDLNGKQLIEHLLEPTKIYVKSVLKLIEESDVHAMAHITGGGFWENIPRVLPANAKAVIDGASWQWPVVFDWLKTNGNISQHEMYRTFNCGVGMIIALPADKVDAALSLLEAAGEQAWLIGSIASREGEEEQVEIV</sequence>
<evidence type="ECO:0000255" key="1">
    <source>
        <dbReference type="HAMAP-Rule" id="MF_00741"/>
    </source>
</evidence>
<proteinExistence type="inferred from homology"/>
<keyword id="KW-0067">ATP-binding</keyword>
<keyword id="KW-0963">Cytoplasm</keyword>
<keyword id="KW-0436">Ligase</keyword>
<keyword id="KW-0547">Nucleotide-binding</keyword>
<keyword id="KW-0658">Purine biosynthesis</keyword>
<keyword id="KW-1185">Reference proteome</keyword>
<reference key="1">
    <citation type="submission" date="2006-03" db="EMBL/GenBank/DDBJ databases">
        <title>Complete sequence of Shewanella denitrificans OS217.</title>
        <authorList>
            <consortium name="US DOE Joint Genome Institute"/>
            <person name="Copeland A."/>
            <person name="Lucas S."/>
            <person name="Lapidus A."/>
            <person name="Barry K."/>
            <person name="Detter J.C."/>
            <person name="Glavina del Rio T."/>
            <person name="Hammon N."/>
            <person name="Israni S."/>
            <person name="Dalin E."/>
            <person name="Tice H."/>
            <person name="Pitluck S."/>
            <person name="Brettin T."/>
            <person name="Bruce D."/>
            <person name="Han C."/>
            <person name="Tapia R."/>
            <person name="Gilna P."/>
            <person name="Kiss H."/>
            <person name="Schmutz J."/>
            <person name="Larimer F."/>
            <person name="Land M."/>
            <person name="Hauser L."/>
            <person name="Kyrpides N."/>
            <person name="Lykidis A."/>
            <person name="Richardson P."/>
        </authorList>
    </citation>
    <scope>NUCLEOTIDE SEQUENCE [LARGE SCALE GENOMIC DNA]</scope>
    <source>
        <strain>OS217 / ATCC BAA-1090 / DSM 15013</strain>
    </source>
</reference>
<dbReference type="EC" id="6.3.3.1" evidence="1"/>
<dbReference type="EMBL" id="CP000302">
    <property type="protein sequence ID" value="ABE55376.1"/>
    <property type="molecule type" value="Genomic_DNA"/>
</dbReference>
<dbReference type="RefSeq" id="WP_011496531.1">
    <property type="nucleotide sequence ID" value="NC_007954.1"/>
</dbReference>
<dbReference type="SMR" id="Q12MF0"/>
<dbReference type="STRING" id="318161.Sden_2094"/>
<dbReference type="KEGG" id="sdn:Sden_2094"/>
<dbReference type="eggNOG" id="COG0150">
    <property type="taxonomic scope" value="Bacteria"/>
</dbReference>
<dbReference type="HOGENOM" id="CLU_047116_0_0_6"/>
<dbReference type="OrthoDB" id="9777881at2"/>
<dbReference type="UniPathway" id="UPA00074">
    <property type="reaction ID" value="UER00129"/>
</dbReference>
<dbReference type="Proteomes" id="UP000001982">
    <property type="component" value="Chromosome"/>
</dbReference>
<dbReference type="GO" id="GO:0005829">
    <property type="term" value="C:cytosol"/>
    <property type="evidence" value="ECO:0007669"/>
    <property type="project" value="TreeGrafter"/>
</dbReference>
<dbReference type="GO" id="GO:0005524">
    <property type="term" value="F:ATP binding"/>
    <property type="evidence" value="ECO:0007669"/>
    <property type="project" value="UniProtKB-KW"/>
</dbReference>
<dbReference type="GO" id="GO:0004637">
    <property type="term" value="F:phosphoribosylamine-glycine ligase activity"/>
    <property type="evidence" value="ECO:0007669"/>
    <property type="project" value="TreeGrafter"/>
</dbReference>
<dbReference type="GO" id="GO:0004641">
    <property type="term" value="F:phosphoribosylformylglycinamidine cyclo-ligase activity"/>
    <property type="evidence" value="ECO:0007669"/>
    <property type="project" value="UniProtKB-UniRule"/>
</dbReference>
<dbReference type="GO" id="GO:0006189">
    <property type="term" value="P:'de novo' IMP biosynthetic process"/>
    <property type="evidence" value="ECO:0007669"/>
    <property type="project" value="UniProtKB-UniRule"/>
</dbReference>
<dbReference type="GO" id="GO:0046084">
    <property type="term" value="P:adenine biosynthetic process"/>
    <property type="evidence" value="ECO:0007669"/>
    <property type="project" value="TreeGrafter"/>
</dbReference>
<dbReference type="CDD" id="cd02196">
    <property type="entry name" value="PurM"/>
    <property type="match status" value="1"/>
</dbReference>
<dbReference type="FunFam" id="3.30.1330.10:FF:000001">
    <property type="entry name" value="Phosphoribosylformylglycinamidine cyclo-ligase"/>
    <property type="match status" value="1"/>
</dbReference>
<dbReference type="FunFam" id="3.90.650.10:FF:000001">
    <property type="entry name" value="Phosphoribosylformylglycinamidine cyclo-ligase"/>
    <property type="match status" value="1"/>
</dbReference>
<dbReference type="Gene3D" id="3.90.650.10">
    <property type="entry name" value="PurM-like C-terminal domain"/>
    <property type="match status" value="1"/>
</dbReference>
<dbReference type="Gene3D" id="3.30.1330.10">
    <property type="entry name" value="PurM-like, N-terminal domain"/>
    <property type="match status" value="1"/>
</dbReference>
<dbReference type="HAMAP" id="MF_00741">
    <property type="entry name" value="AIRS"/>
    <property type="match status" value="1"/>
</dbReference>
<dbReference type="InterPro" id="IPR010918">
    <property type="entry name" value="PurM-like_C_dom"/>
</dbReference>
<dbReference type="InterPro" id="IPR036676">
    <property type="entry name" value="PurM-like_C_sf"/>
</dbReference>
<dbReference type="InterPro" id="IPR016188">
    <property type="entry name" value="PurM-like_N"/>
</dbReference>
<dbReference type="InterPro" id="IPR036921">
    <property type="entry name" value="PurM-like_N_sf"/>
</dbReference>
<dbReference type="InterPro" id="IPR004733">
    <property type="entry name" value="PurM_cligase"/>
</dbReference>
<dbReference type="NCBIfam" id="TIGR00878">
    <property type="entry name" value="purM"/>
    <property type="match status" value="1"/>
</dbReference>
<dbReference type="PANTHER" id="PTHR10520:SF12">
    <property type="entry name" value="TRIFUNCTIONAL PURINE BIOSYNTHETIC PROTEIN ADENOSINE-3"/>
    <property type="match status" value="1"/>
</dbReference>
<dbReference type="PANTHER" id="PTHR10520">
    <property type="entry name" value="TRIFUNCTIONAL PURINE BIOSYNTHETIC PROTEIN ADENOSINE-3-RELATED"/>
    <property type="match status" value="1"/>
</dbReference>
<dbReference type="Pfam" id="PF00586">
    <property type="entry name" value="AIRS"/>
    <property type="match status" value="1"/>
</dbReference>
<dbReference type="Pfam" id="PF02769">
    <property type="entry name" value="AIRS_C"/>
    <property type="match status" value="1"/>
</dbReference>
<dbReference type="SUPFAM" id="SSF56042">
    <property type="entry name" value="PurM C-terminal domain-like"/>
    <property type="match status" value="1"/>
</dbReference>
<dbReference type="SUPFAM" id="SSF55326">
    <property type="entry name" value="PurM N-terminal domain-like"/>
    <property type="match status" value="1"/>
</dbReference>